<keyword id="KW-0687">Ribonucleoprotein</keyword>
<keyword id="KW-0689">Ribosomal protein</keyword>
<keyword id="KW-0694">RNA-binding</keyword>
<keyword id="KW-0699">rRNA-binding</keyword>
<evidence type="ECO:0000255" key="1">
    <source>
        <dbReference type="HAMAP-Rule" id="MF_01328"/>
    </source>
</evidence>
<evidence type="ECO:0000256" key="2">
    <source>
        <dbReference type="SAM" id="MobiDB-lite"/>
    </source>
</evidence>
<evidence type="ECO:0000305" key="3"/>
<feature type="chain" id="PRO_1000052516" description="Large ribosomal subunit protein uL4">
    <location>
        <begin position="1"/>
        <end position="207"/>
    </location>
</feature>
<feature type="region of interest" description="Disordered" evidence="2">
    <location>
        <begin position="49"/>
        <end position="78"/>
    </location>
</feature>
<organism>
    <name type="scientific">Streptococcus thermophilus (strain ATCC BAA-491 / LMD-9)</name>
    <dbReference type="NCBI Taxonomy" id="322159"/>
    <lineage>
        <taxon>Bacteria</taxon>
        <taxon>Bacillati</taxon>
        <taxon>Bacillota</taxon>
        <taxon>Bacilli</taxon>
        <taxon>Lactobacillales</taxon>
        <taxon>Streptococcaceae</taxon>
        <taxon>Streptococcus</taxon>
    </lineage>
</organism>
<gene>
    <name evidence="1" type="primary">rplD</name>
    <name type="ordered locus">STER_1906</name>
</gene>
<proteinExistence type="inferred from homology"/>
<dbReference type="EMBL" id="CP000419">
    <property type="protein sequence ID" value="ABJ67020.1"/>
    <property type="molecule type" value="Genomic_DNA"/>
</dbReference>
<dbReference type="RefSeq" id="WP_002885795.1">
    <property type="nucleotide sequence ID" value="NC_008532.1"/>
</dbReference>
<dbReference type="SMR" id="Q03IF2"/>
<dbReference type="GeneID" id="66899661"/>
<dbReference type="KEGG" id="ste:STER_1906"/>
<dbReference type="HOGENOM" id="CLU_041575_5_2_9"/>
<dbReference type="GO" id="GO:1990904">
    <property type="term" value="C:ribonucleoprotein complex"/>
    <property type="evidence" value="ECO:0007669"/>
    <property type="project" value="UniProtKB-KW"/>
</dbReference>
<dbReference type="GO" id="GO:0005840">
    <property type="term" value="C:ribosome"/>
    <property type="evidence" value="ECO:0007669"/>
    <property type="project" value="UniProtKB-KW"/>
</dbReference>
<dbReference type="GO" id="GO:0019843">
    <property type="term" value="F:rRNA binding"/>
    <property type="evidence" value="ECO:0007669"/>
    <property type="project" value="UniProtKB-UniRule"/>
</dbReference>
<dbReference type="GO" id="GO:0003735">
    <property type="term" value="F:structural constituent of ribosome"/>
    <property type="evidence" value="ECO:0007669"/>
    <property type="project" value="InterPro"/>
</dbReference>
<dbReference type="GO" id="GO:0006412">
    <property type="term" value="P:translation"/>
    <property type="evidence" value="ECO:0007669"/>
    <property type="project" value="UniProtKB-UniRule"/>
</dbReference>
<dbReference type="FunFam" id="3.40.1370.10:FF:000003">
    <property type="entry name" value="50S ribosomal protein L4"/>
    <property type="match status" value="1"/>
</dbReference>
<dbReference type="Gene3D" id="3.40.1370.10">
    <property type="match status" value="1"/>
</dbReference>
<dbReference type="HAMAP" id="MF_01328_B">
    <property type="entry name" value="Ribosomal_uL4_B"/>
    <property type="match status" value="1"/>
</dbReference>
<dbReference type="InterPro" id="IPR002136">
    <property type="entry name" value="Ribosomal_uL4"/>
</dbReference>
<dbReference type="InterPro" id="IPR013005">
    <property type="entry name" value="Ribosomal_uL4-like"/>
</dbReference>
<dbReference type="InterPro" id="IPR023574">
    <property type="entry name" value="Ribosomal_uL4_dom_sf"/>
</dbReference>
<dbReference type="NCBIfam" id="TIGR03953">
    <property type="entry name" value="rplD_bact"/>
    <property type="match status" value="1"/>
</dbReference>
<dbReference type="PANTHER" id="PTHR10746">
    <property type="entry name" value="50S RIBOSOMAL PROTEIN L4"/>
    <property type="match status" value="1"/>
</dbReference>
<dbReference type="PANTHER" id="PTHR10746:SF6">
    <property type="entry name" value="LARGE RIBOSOMAL SUBUNIT PROTEIN UL4M"/>
    <property type="match status" value="1"/>
</dbReference>
<dbReference type="Pfam" id="PF00573">
    <property type="entry name" value="Ribosomal_L4"/>
    <property type="match status" value="1"/>
</dbReference>
<dbReference type="SUPFAM" id="SSF52166">
    <property type="entry name" value="Ribosomal protein L4"/>
    <property type="match status" value="1"/>
</dbReference>
<reference key="1">
    <citation type="journal article" date="2006" name="Proc. Natl. Acad. Sci. U.S.A.">
        <title>Comparative genomics of the lactic acid bacteria.</title>
        <authorList>
            <person name="Makarova K.S."/>
            <person name="Slesarev A."/>
            <person name="Wolf Y.I."/>
            <person name="Sorokin A."/>
            <person name="Mirkin B."/>
            <person name="Koonin E.V."/>
            <person name="Pavlov A."/>
            <person name="Pavlova N."/>
            <person name="Karamychev V."/>
            <person name="Polouchine N."/>
            <person name="Shakhova V."/>
            <person name="Grigoriev I."/>
            <person name="Lou Y."/>
            <person name="Rohksar D."/>
            <person name="Lucas S."/>
            <person name="Huang K."/>
            <person name="Goodstein D.M."/>
            <person name="Hawkins T."/>
            <person name="Plengvidhya V."/>
            <person name="Welker D."/>
            <person name="Hughes J."/>
            <person name="Goh Y."/>
            <person name="Benson A."/>
            <person name="Baldwin K."/>
            <person name="Lee J.-H."/>
            <person name="Diaz-Muniz I."/>
            <person name="Dosti B."/>
            <person name="Smeianov V."/>
            <person name="Wechter W."/>
            <person name="Barabote R."/>
            <person name="Lorca G."/>
            <person name="Altermann E."/>
            <person name="Barrangou R."/>
            <person name="Ganesan B."/>
            <person name="Xie Y."/>
            <person name="Rawsthorne H."/>
            <person name="Tamir D."/>
            <person name="Parker C."/>
            <person name="Breidt F."/>
            <person name="Broadbent J.R."/>
            <person name="Hutkins R."/>
            <person name="O'Sullivan D."/>
            <person name="Steele J."/>
            <person name="Unlu G."/>
            <person name="Saier M.H. Jr."/>
            <person name="Klaenhammer T."/>
            <person name="Richardson P."/>
            <person name="Kozyavkin S."/>
            <person name="Weimer B.C."/>
            <person name="Mills D.A."/>
        </authorList>
    </citation>
    <scope>NUCLEOTIDE SEQUENCE [LARGE SCALE GENOMIC DNA]</scope>
    <source>
        <strain>ATCC BAA-491 / LMD-9</strain>
    </source>
</reference>
<name>RL4_STRTD</name>
<sequence length="207" mass="22168">MANVKLFDQTGKEVSTVELNDAIFGIEPNESVVFDVVISQRASLRQGTHAVKNRSAVSGGGRKPWRQKGTGRARQGSIRSPQWRGGGVVFGPTPRSYGYKLPQKVRRLALKSVYSAKVAEDKFVAVEALSFAAPKTAEFANVLSALSIDSKVLVIVEEGNKFAELSARNLANVTVATPATASVLDIVNADKLLVTKEAISSIEEVLA</sequence>
<comment type="function">
    <text evidence="1">One of the primary rRNA binding proteins, this protein initially binds near the 5'-end of the 23S rRNA. It is important during the early stages of 50S assembly. It makes multiple contacts with different domains of the 23S rRNA in the assembled 50S subunit and ribosome.</text>
</comment>
<comment type="function">
    <text evidence="1">Forms part of the polypeptide exit tunnel.</text>
</comment>
<comment type="subunit">
    <text evidence="1">Part of the 50S ribosomal subunit.</text>
</comment>
<comment type="similarity">
    <text evidence="1">Belongs to the universal ribosomal protein uL4 family.</text>
</comment>
<protein>
    <recommendedName>
        <fullName evidence="1">Large ribosomal subunit protein uL4</fullName>
    </recommendedName>
    <alternativeName>
        <fullName evidence="3">50S ribosomal protein L4</fullName>
    </alternativeName>
</protein>
<accession>Q03IF2</accession>